<sequence>MAAQAQAPARDGGAQLAGPAAEADPLGRFTCPVCLEVYEKPVQVPCGHVFCSACLQECLKPKKPVCGVCRSALAPGVRAVELERQIESTETSCHGCRKNFFLSKIRAHVATCSKYQNYIMEGVKATTKDASRQPRSVPNRYTFPCPYCPEKNFDQEGLVEHCKLSHSTDTKSVVCPICASMPWGDPNYRSANFIEHLQRRHQFSYDTFVDYDVDEEDMINQVLQRSIIDQ</sequence>
<proteinExistence type="evidence at transcript level"/>
<evidence type="ECO:0000250" key="1">
    <source>
        <dbReference type="UniProtKB" id="Q9Y508"/>
    </source>
</evidence>
<evidence type="ECO:0000255" key="2">
    <source>
        <dbReference type="PROSITE-ProRule" id="PRU00175"/>
    </source>
</evidence>
<evidence type="ECO:0000255" key="3">
    <source>
        <dbReference type="PROSITE-ProRule" id="PRU01144"/>
    </source>
</evidence>
<evidence type="ECO:0000305" key="4"/>
<name>RN114_BOVIN</name>
<protein>
    <recommendedName>
        <fullName>E3 ubiquitin-protein ligase RNF114</fullName>
        <ecNumber evidence="1">2.3.2.27</ecNumber>
    </recommendedName>
    <alternativeName>
        <fullName>RING finger protein 114</fullName>
    </alternativeName>
    <alternativeName>
        <fullName evidence="4">RING-type E3 ubiquitin transferase RNF114</fullName>
    </alternativeName>
    <alternativeName>
        <fullName>Zinc finger protein 313</fullName>
    </alternativeName>
</protein>
<keyword id="KW-0007">Acetylation</keyword>
<keyword id="KW-0963">Cytoplasm</keyword>
<keyword id="KW-0217">Developmental protein</keyword>
<keyword id="KW-0221">Differentiation</keyword>
<keyword id="KW-0479">Metal-binding</keyword>
<keyword id="KW-0539">Nucleus</keyword>
<keyword id="KW-1185">Reference proteome</keyword>
<keyword id="KW-0744">Spermatogenesis</keyword>
<keyword id="KW-0808">Transferase</keyword>
<keyword id="KW-0832">Ubl conjugation</keyword>
<keyword id="KW-0833">Ubl conjugation pathway</keyword>
<keyword id="KW-0862">Zinc</keyword>
<keyword id="KW-0863">Zinc-finger</keyword>
<gene>
    <name type="primary">RNF114</name>
    <name type="synonym">ZNF313</name>
</gene>
<organism>
    <name type="scientific">Bos taurus</name>
    <name type="common">Bovine</name>
    <dbReference type="NCBI Taxonomy" id="9913"/>
    <lineage>
        <taxon>Eukaryota</taxon>
        <taxon>Metazoa</taxon>
        <taxon>Chordata</taxon>
        <taxon>Craniata</taxon>
        <taxon>Vertebrata</taxon>
        <taxon>Euteleostomi</taxon>
        <taxon>Mammalia</taxon>
        <taxon>Eutheria</taxon>
        <taxon>Laurasiatheria</taxon>
        <taxon>Artiodactyla</taxon>
        <taxon>Ruminantia</taxon>
        <taxon>Pecora</taxon>
        <taxon>Bovidae</taxon>
        <taxon>Bovinae</taxon>
        <taxon>Bos</taxon>
    </lineage>
</organism>
<comment type="function">
    <text evidence="1">E3 ubiquitin-protein ligase that promotes the ubiquitination of various substrates. In turn, participates in the regulation of many biological processes including cell cycle, apoptosis, osteoclastogenesis as well as innate or adaptive immunity. Acts as negative regulator of NF-kappa-B-dependent transcription by promoting the ubiquitination and stabilization of the NF-kappa-B inhibitor TNFAIP3. May promote the ubiquitination of TRAF6 as well. Also acts as a negative regulator of T-cell activation. Inhibits cellular dsRNA responses and interferon production by targeting MAVS component for proteasomal degradation. Ubiquitinates the CDK inhibitor CDKN1A leading to its degradationand probably also CDKN1B and CDKN1C. This activity stimulates cell cycle G1-to-S phase transition and suppresses cellular senescence. May play a role in spermatogenesis.</text>
</comment>
<comment type="catalytic activity">
    <reaction evidence="1">
        <text>S-ubiquitinyl-[E2 ubiquitin-conjugating enzyme]-L-cysteine + [acceptor protein]-L-lysine = [E2 ubiquitin-conjugating enzyme]-L-cysteine + N(6)-ubiquitinyl-[acceptor protein]-L-lysine.</text>
        <dbReference type="EC" id="2.3.2.27"/>
    </reaction>
</comment>
<comment type="pathway">
    <text evidence="1">Protein modification; protein ubiquitination.</text>
</comment>
<comment type="subunit">
    <text evidence="1">Interacts with XAF1, the interaction increases XAF1 stability and proapoptotic effects, and may regulate IFN signaling.</text>
</comment>
<comment type="subcellular location">
    <subcellularLocation>
        <location evidence="1">Cytoplasm</location>
    </subcellularLocation>
    <subcellularLocation>
        <location evidence="1">Nucleus</location>
    </subcellularLocation>
</comment>
<comment type="PTM">
    <text evidence="1">Autoubiquitinated. Polyubiquitinated in the presence of E2 enzymes UBE2D1, UBE2D2 and UBE2D3, but only monoubiquitinated in the presence of UBE2E1.</text>
</comment>
<reference key="1">
    <citation type="submission" date="2005-04" db="EMBL/GenBank/DDBJ databases">
        <title>Molecular cloning and characterization of bovine zinc finger protein 313 (Znf313) gene.</title>
        <authorList>
            <person name="Cao S.Z."/>
            <person name="Lee H.B."/>
            <person name="Wang A.H."/>
            <person name="Zhao X.X."/>
            <person name="Du L.X."/>
        </authorList>
    </citation>
    <scope>NUCLEOTIDE SEQUENCE [MRNA]</scope>
</reference>
<reference key="2">
    <citation type="submission" date="2005-08" db="EMBL/GenBank/DDBJ databases">
        <authorList>
            <consortium name="NIH - Mammalian Gene Collection (MGC) project"/>
        </authorList>
    </citation>
    <scope>NUCLEOTIDE SEQUENCE [LARGE SCALE MRNA]</scope>
    <source>
        <strain>Crossbred X Angus</strain>
        <tissue>Ileum</tissue>
    </source>
</reference>
<reference key="3">
    <citation type="journal article" date="2005" name="BMC Genomics">
        <title>Characterization of 954 bovine full-CDS cDNA sequences.</title>
        <authorList>
            <person name="Harhay G.P."/>
            <person name="Sonstegard T.S."/>
            <person name="Keele J.W."/>
            <person name="Heaton M.P."/>
            <person name="Clawson M.L."/>
            <person name="Snelling W.M."/>
            <person name="Wiedmann R.T."/>
            <person name="Van Tassell C.P."/>
            <person name="Smith T.P.L."/>
        </authorList>
    </citation>
    <scope>NUCLEOTIDE SEQUENCE [LARGE SCALE MRNA] OF 2-230</scope>
</reference>
<accession>Q4U5R4</accession>
<accession>A5D9G2</accession>
<accession>Q3T0F8</accession>
<feature type="chain" id="PRO_0000056306" description="E3 ubiquitin-protein ligase RNF114">
    <location>
        <begin position="1"/>
        <end position="230"/>
    </location>
</feature>
<feature type="zinc finger region" description="RING-type" evidence="2">
    <location>
        <begin position="31"/>
        <end position="70"/>
    </location>
</feature>
<feature type="zinc finger region" description="C2HC RNF-type" evidence="3">
    <location>
        <begin position="93"/>
        <end position="112"/>
    </location>
</feature>
<feature type="binding site" evidence="3">
    <location>
        <position position="93"/>
    </location>
    <ligand>
        <name>Zn(2+)</name>
        <dbReference type="ChEBI" id="CHEBI:29105"/>
    </ligand>
</feature>
<feature type="binding site" evidence="3">
    <location>
        <position position="96"/>
    </location>
    <ligand>
        <name>Zn(2+)</name>
        <dbReference type="ChEBI" id="CHEBI:29105"/>
    </ligand>
</feature>
<feature type="binding site" evidence="3">
    <location>
        <position position="108"/>
    </location>
    <ligand>
        <name>Zn(2+)</name>
        <dbReference type="ChEBI" id="CHEBI:29105"/>
    </ligand>
</feature>
<feature type="binding site" evidence="3">
    <location>
        <position position="112"/>
    </location>
    <ligand>
        <name>Zn(2+)</name>
        <dbReference type="ChEBI" id="CHEBI:29105"/>
    </ligand>
</feature>
<feature type="modified residue" description="N6-acetyllysine" evidence="1">
    <location>
        <position position="104"/>
    </location>
</feature>
<feature type="modified residue" description="N6-acetyllysine" evidence="1">
    <location>
        <position position="114"/>
    </location>
</feature>
<dbReference type="EC" id="2.3.2.27" evidence="1"/>
<dbReference type="EMBL" id="DQ010409">
    <property type="protein sequence ID" value="AAY33866.1"/>
    <property type="molecule type" value="mRNA"/>
</dbReference>
<dbReference type="EMBL" id="BC102412">
    <property type="protein sequence ID" value="AAI02413.1"/>
    <property type="molecule type" value="mRNA"/>
</dbReference>
<dbReference type="EMBL" id="BT030581">
    <property type="protein sequence ID" value="ABQ13021.1"/>
    <property type="molecule type" value="mRNA"/>
</dbReference>
<dbReference type="RefSeq" id="NP_001019702.1">
    <property type="nucleotide sequence ID" value="NM_001024531.3"/>
</dbReference>
<dbReference type="RefSeq" id="XP_005214742.1">
    <property type="nucleotide sequence ID" value="XM_005214685.3"/>
</dbReference>
<dbReference type="RefSeq" id="XP_005214743.1">
    <property type="nucleotide sequence ID" value="XM_005214686.2"/>
</dbReference>
<dbReference type="FunCoup" id="Q4U5R4">
    <property type="interactions" value="3244"/>
</dbReference>
<dbReference type="PaxDb" id="9913-ENSBTAP00000038956"/>
<dbReference type="Ensembl" id="ENSBTAT00000039156.3">
    <property type="protein sequence ID" value="ENSBTAP00000038956.2"/>
    <property type="gene ID" value="ENSBTAG00000027317.4"/>
</dbReference>
<dbReference type="GeneID" id="513479"/>
<dbReference type="KEGG" id="bta:513479"/>
<dbReference type="CTD" id="55905"/>
<dbReference type="VEuPathDB" id="HostDB:ENSBTAG00000027317"/>
<dbReference type="VGNC" id="VGNC:34012">
    <property type="gene designation" value="RNF114"/>
</dbReference>
<dbReference type="eggNOG" id="ENOG502QW3F">
    <property type="taxonomic scope" value="Eukaryota"/>
</dbReference>
<dbReference type="GeneTree" id="ENSGT00950000182909"/>
<dbReference type="HOGENOM" id="CLU_092448_1_0_1"/>
<dbReference type="InParanoid" id="Q4U5R4"/>
<dbReference type="OMA" id="RTQCGHT"/>
<dbReference type="OrthoDB" id="6270329at2759"/>
<dbReference type="TreeFam" id="TF331012"/>
<dbReference type="Reactome" id="R-BTA-983168">
    <property type="pathway name" value="Antigen processing: Ubiquitination &amp; Proteasome degradation"/>
</dbReference>
<dbReference type="UniPathway" id="UPA00143"/>
<dbReference type="Proteomes" id="UP000009136">
    <property type="component" value="Chromosome 13"/>
</dbReference>
<dbReference type="Bgee" id="ENSBTAG00000027317">
    <property type="expression patterns" value="Expressed in thyroid gland and 106 other cell types or tissues"/>
</dbReference>
<dbReference type="GO" id="GO:0005829">
    <property type="term" value="C:cytosol"/>
    <property type="evidence" value="ECO:0007669"/>
    <property type="project" value="Ensembl"/>
</dbReference>
<dbReference type="GO" id="GO:0005634">
    <property type="term" value="C:nucleus"/>
    <property type="evidence" value="ECO:0007669"/>
    <property type="project" value="UniProtKB-SubCell"/>
</dbReference>
<dbReference type="GO" id="GO:0005886">
    <property type="term" value="C:plasma membrane"/>
    <property type="evidence" value="ECO:0007669"/>
    <property type="project" value="Ensembl"/>
</dbReference>
<dbReference type="GO" id="GO:0061630">
    <property type="term" value="F:ubiquitin protein ligase activity"/>
    <property type="evidence" value="ECO:0000318"/>
    <property type="project" value="GO_Central"/>
</dbReference>
<dbReference type="GO" id="GO:0008270">
    <property type="term" value="F:zinc ion binding"/>
    <property type="evidence" value="ECO:0007669"/>
    <property type="project" value="UniProtKB-KW"/>
</dbReference>
<dbReference type="GO" id="GO:0030154">
    <property type="term" value="P:cell differentiation"/>
    <property type="evidence" value="ECO:0007669"/>
    <property type="project" value="UniProtKB-KW"/>
</dbReference>
<dbReference type="GO" id="GO:0000209">
    <property type="term" value="P:protein polyubiquitination"/>
    <property type="evidence" value="ECO:0000318"/>
    <property type="project" value="GO_Central"/>
</dbReference>
<dbReference type="GO" id="GO:0007283">
    <property type="term" value="P:spermatogenesis"/>
    <property type="evidence" value="ECO:0007669"/>
    <property type="project" value="UniProtKB-KW"/>
</dbReference>
<dbReference type="GO" id="GO:0006511">
    <property type="term" value="P:ubiquitin-dependent protein catabolic process"/>
    <property type="evidence" value="ECO:0000318"/>
    <property type="project" value="GO_Central"/>
</dbReference>
<dbReference type="CDD" id="cd16540">
    <property type="entry name" value="RING-HC_RNF114"/>
    <property type="match status" value="1"/>
</dbReference>
<dbReference type="FunFam" id="3.30.40.10:FF:000408">
    <property type="entry name" value="E3 ubiquitin-protein ligase RNF114"/>
    <property type="match status" value="1"/>
</dbReference>
<dbReference type="Gene3D" id="3.30.40.10">
    <property type="entry name" value="Zinc/RING finger domain, C3HC4 (zinc finger)"/>
    <property type="match status" value="1"/>
</dbReference>
<dbReference type="InterPro" id="IPR008598">
    <property type="entry name" value="Di19_Zn-bd"/>
</dbReference>
<dbReference type="InterPro" id="IPR042716">
    <property type="entry name" value="RNF114_RING-HC"/>
</dbReference>
<dbReference type="InterPro" id="IPR051438">
    <property type="entry name" value="RNF_E3_ubiq-protein_ligase"/>
</dbReference>
<dbReference type="InterPro" id="IPR034734">
    <property type="entry name" value="ZF_C2HC_RNF"/>
</dbReference>
<dbReference type="InterPro" id="IPR027370">
    <property type="entry name" value="Znf-RING_euk"/>
</dbReference>
<dbReference type="InterPro" id="IPR001841">
    <property type="entry name" value="Znf_RING"/>
</dbReference>
<dbReference type="InterPro" id="IPR013083">
    <property type="entry name" value="Znf_RING/FYVE/PHD"/>
</dbReference>
<dbReference type="InterPro" id="IPR017907">
    <property type="entry name" value="Znf_RING_CS"/>
</dbReference>
<dbReference type="PANTHER" id="PTHR46016:SF3">
    <property type="entry name" value="E3 UBIQUITIN-PROTEIN LIGASE RNF114"/>
    <property type="match status" value="1"/>
</dbReference>
<dbReference type="PANTHER" id="PTHR46016">
    <property type="entry name" value="ZINC FINGER, RING/FYVE/PHD-TYPE"/>
    <property type="match status" value="1"/>
</dbReference>
<dbReference type="Pfam" id="PF05605">
    <property type="entry name" value="zf-Di19"/>
    <property type="match status" value="1"/>
</dbReference>
<dbReference type="Pfam" id="PF13445">
    <property type="entry name" value="zf-RING_UBOX"/>
    <property type="match status" value="1"/>
</dbReference>
<dbReference type="Pfam" id="PF18574">
    <property type="entry name" value="zf_C2HC_14"/>
    <property type="match status" value="1"/>
</dbReference>
<dbReference type="SMART" id="SM00184">
    <property type="entry name" value="RING"/>
    <property type="match status" value="1"/>
</dbReference>
<dbReference type="SUPFAM" id="SSF57850">
    <property type="entry name" value="RING/U-box"/>
    <property type="match status" value="1"/>
</dbReference>
<dbReference type="PROSITE" id="PS51803">
    <property type="entry name" value="ZF_C2HC_RNF"/>
    <property type="match status" value="1"/>
</dbReference>
<dbReference type="PROSITE" id="PS00518">
    <property type="entry name" value="ZF_RING_1"/>
    <property type="match status" value="1"/>
</dbReference>
<dbReference type="PROSITE" id="PS50089">
    <property type="entry name" value="ZF_RING_2"/>
    <property type="match status" value="1"/>
</dbReference>